<sequence length="334" mass="36093">MLYSLARPMLFSLAPERAHELTLSMLDKAHKLGMMRQTVEAKPTTCMGIEFPNPVGLAAGLDKNGAHIDALAGLGFGFIEIGTITPRPQSGNPKPRLFRIPEAKAIINRMGFNNDGVDKLIENVKASKFRGILGINIGKNADTPVEKAVDDYLICLEKVYNYASYITVNISSPNTKNLRSLQSGDALTELLQTLKARQLELAEQYNHYVPLVLKVAPDLTAEDVEFISAQLLDFKIDGLIVTNTTLSREGVENLPYGNESGGLSGAPVFEKSTECLRLFAQTLKGQIPLIGVGGILSGEQAAAKQQAGATLVQIYSGLIYTGPTLVKQCVEAMT</sequence>
<accession>B7I2L5</accession>
<evidence type="ECO:0000255" key="1">
    <source>
        <dbReference type="HAMAP-Rule" id="MF_00225"/>
    </source>
</evidence>
<feature type="chain" id="PRO_1000195056" description="Dihydroorotate dehydrogenase (quinone)">
    <location>
        <begin position="1"/>
        <end position="334"/>
    </location>
</feature>
<feature type="active site" description="Nucleophile" evidence="1">
    <location>
        <position position="172"/>
    </location>
</feature>
<feature type="binding site" evidence="1">
    <location>
        <begin position="59"/>
        <end position="63"/>
    </location>
    <ligand>
        <name>FMN</name>
        <dbReference type="ChEBI" id="CHEBI:58210"/>
    </ligand>
</feature>
<feature type="binding site" evidence="1">
    <location>
        <position position="63"/>
    </location>
    <ligand>
        <name>substrate</name>
    </ligand>
</feature>
<feature type="binding site" evidence="1">
    <location>
        <position position="83"/>
    </location>
    <ligand>
        <name>FMN</name>
        <dbReference type="ChEBI" id="CHEBI:58210"/>
    </ligand>
</feature>
<feature type="binding site" evidence="1">
    <location>
        <begin position="108"/>
        <end position="112"/>
    </location>
    <ligand>
        <name>substrate</name>
    </ligand>
</feature>
<feature type="binding site" evidence="1">
    <location>
        <position position="136"/>
    </location>
    <ligand>
        <name>FMN</name>
        <dbReference type="ChEBI" id="CHEBI:58210"/>
    </ligand>
</feature>
<feature type="binding site" evidence="1">
    <location>
        <position position="169"/>
    </location>
    <ligand>
        <name>FMN</name>
        <dbReference type="ChEBI" id="CHEBI:58210"/>
    </ligand>
</feature>
<feature type="binding site" evidence="1">
    <location>
        <position position="169"/>
    </location>
    <ligand>
        <name>substrate</name>
    </ligand>
</feature>
<feature type="binding site" evidence="1">
    <location>
        <position position="174"/>
    </location>
    <ligand>
        <name>substrate</name>
    </ligand>
</feature>
<feature type="binding site" evidence="1">
    <location>
        <position position="214"/>
    </location>
    <ligand>
        <name>FMN</name>
        <dbReference type="ChEBI" id="CHEBI:58210"/>
    </ligand>
</feature>
<feature type="binding site" evidence="1">
    <location>
        <position position="242"/>
    </location>
    <ligand>
        <name>FMN</name>
        <dbReference type="ChEBI" id="CHEBI:58210"/>
    </ligand>
</feature>
<feature type="binding site" evidence="1">
    <location>
        <begin position="243"/>
        <end position="244"/>
    </location>
    <ligand>
        <name>substrate</name>
    </ligand>
</feature>
<feature type="binding site" evidence="1">
    <location>
        <position position="265"/>
    </location>
    <ligand>
        <name>FMN</name>
        <dbReference type="ChEBI" id="CHEBI:58210"/>
    </ligand>
</feature>
<feature type="binding site" evidence="1">
    <location>
        <position position="294"/>
    </location>
    <ligand>
        <name>FMN</name>
        <dbReference type="ChEBI" id="CHEBI:58210"/>
    </ligand>
</feature>
<feature type="binding site" evidence="1">
    <location>
        <begin position="315"/>
        <end position="316"/>
    </location>
    <ligand>
        <name>FMN</name>
        <dbReference type="ChEBI" id="CHEBI:58210"/>
    </ligand>
</feature>
<protein>
    <recommendedName>
        <fullName evidence="1">Dihydroorotate dehydrogenase (quinone)</fullName>
        <ecNumber evidence="1">1.3.5.2</ecNumber>
    </recommendedName>
    <alternativeName>
        <fullName evidence="1">DHOdehase</fullName>
        <shortName evidence="1">DHOD</shortName>
        <shortName evidence="1">DHODase</shortName>
    </alternativeName>
    <alternativeName>
        <fullName evidence="1">Dihydroorotate oxidase</fullName>
    </alternativeName>
</protein>
<gene>
    <name evidence="1" type="primary">pyrD</name>
    <name type="ordered locus">AB57_2609</name>
</gene>
<proteinExistence type="inferred from homology"/>
<comment type="function">
    <text evidence="1">Catalyzes the conversion of dihydroorotate to orotate with quinone as electron acceptor.</text>
</comment>
<comment type="catalytic activity">
    <reaction evidence="1">
        <text>(S)-dihydroorotate + a quinone = orotate + a quinol</text>
        <dbReference type="Rhea" id="RHEA:30187"/>
        <dbReference type="ChEBI" id="CHEBI:24646"/>
        <dbReference type="ChEBI" id="CHEBI:30839"/>
        <dbReference type="ChEBI" id="CHEBI:30864"/>
        <dbReference type="ChEBI" id="CHEBI:132124"/>
        <dbReference type="EC" id="1.3.5.2"/>
    </reaction>
</comment>
<comment type="cofactor">
    <cofactor evidence="1">
        <name>FMN</name>
        <dbReference type="ChEBI" id="CHEBI:58210"/>
    </cofactor>
    <text evidence="1">Binds 1 FMN per subunit.</text>
</comment>
<comment type="pathway">
    <text evidence="1">Pyrimidine metabolism; UMP biosynthesis via de novo pathway; orotate from (S)-dihydroorotate (quinone route): step 1/1.</text>
</comment>
<comment type="subunit">
    <text evidence="1">Monomer.</text>
</comment>
<comment type="subcellular location">
    <subcellularLocation>
        <location evidence="1">Cell membrane</location>
        <topology evidence="1">Peripheral membrane protein</topology>
    </subcellularLocation>
</comment>
<comment type="similarity">
    <text evidence="1">Belongs to the dihydroorotate dehydrogenase family. Type 2 subfamily.</text>
</comment>
<name>PYRD_ACIB5</name>
<keyword id="KW-1003">Cell membrane</keyword>
<keyword id="KW-0285">Flavoprotein</keyword>
<keyword id="KW-0288">FMN</keyword>
<keyword id="KW-0472">Membrane</keyword>
<keyword id="KW-0560">Oxidoreductase</keyword>
<keyword id="KW-0665">Pyrimidine biosynthesis</keyword>
<dbReference type="EC" id="1.3.5.2" evidence="1"/>
<dbReference type="EMBL" id="CP001182">
    <property type="protein sequence ID" value="ACJ42717.1"/>
    <property type="molecule type" value="Genomic_DNA"/>
</dbReference>
<dbReference type="RefSeq" id="WP_000966986.1">
    <property type="nucleotide sequence ID" value="NC_011586.2"/>
</dbReference>
<dbReference type="SMR" id="B7I2L5"/>
<dbReference type="KEGG" id="abn:AB57_2609"/>
<dbReference type="HOGENOM" id="CLU_013640_2_0_6"/>
<dbReference type="UniPathway" id="UPA00070">
    <property type="reaction ID" value="UER00946"/>
</dbReference>
<dbReference type="Proteomes" id="UP000007094">
    <property type="component" value="Chromosome"/>
</dbReference>
<dbReference type="GO" id="GO:0005737">
    <property type="term" value="C:cytoplasm"/>
    <property type="evidence" value="ECO:0007669"/>
    <property type="project" value="InterPro"/>
</dbReference>
<dbReference type="GO" id="GO:0005886">
    <property type="term" value="C:plasma membrane"/>
    <property type="evidence" value="ECO:0007669"/>
    <property type="project" value="UniProtKB-SubCell"/>
</dbReference>
<dbReference type="GO" id="GO:0106430">
    <property type="term" value="F:dihydroorotate dehydrogenase (quinone) activity"/>
    <property type="evidence" value="ECO:0007669"/>
    <property type="project" value="UniProtKB-EC"/>
</dbReference>
<dbReference type="GO" id="GO:0006207">
    <property type="term" value="P:'de novo' pyrimidine nucleobase biosynthetic process"/>
    <property type="evidence" value="ECO:0007669"/>
    <property type="project" value="InterPro"/>
</dbReference>
<dbReference type="GO" id="GO:0044205">
    <property type="term" value="P:'de novo' UMP biosynthetic process"/>
    <property type="evidence" value="ECO:0007669"/>
    <property type="project" value="UniProtKB-UniRule"/>
</dbReference>
<dbReference type="CDD" id="cd04738">
    <property type="entry name" value="DHOD_2_like"/>
    <property type="match status" value="1"/>
</dbReference>
<dbReference type="FunFam" id="3.20.20.70:FF:000028">
    <property type="entry name" value="Dihydroorotate dehydrogenase (quinone)"/>
    <property type="match status" value="1"/>
</dbReference>
<dbReference type="Gene3D" id="3.20.20.70">
    <property type="entry name" value="Aldolase class I"/>
    <property type="match status" value="1"/>
</dbReference>
<dbReference type="HAMAP" id="MF_00225">
    <property type="entry name" value="DHO_dh_type2"/>
    <property type="match status" value="1"/>
</dbReference>
<dbReference type="InterPro" id="IPR013785">
    <property type="entry name" value="Aldolase_TIM"/>
</dbReference>
<dbReference type="InterPro" id="IPR050074">
    <property type="entry name" value="DHO_dehydrogenase"/>
</dbReference>
<dbReference type="InterPro" id="IPR012135">
    <property type="entry name" value="Dihydroorotate_DH_1_2"/>
</dbReference>
<dbReference type="InterPro" id="IPR005719">
    <property type="entry name" value="Dihydroorotate_DH_2"/>
</dbReference>
<dbReference type="InterPro" id="IPR005720">
    <property type="entry name" value="Dihydroorotate_DH_cat"/>
</dbReference>
<dbReference type="InterPro" id="IPR001295">
    <property type="entry name" value="Dihydroorotate_DH_CS"/>
</dbReference>
<dbReference type="NCBIfam" id="NF003644">
    <property type="entry name" value="PRK05286.1-1"/>
    <property type="match status" value="1"/>
</dbReference>
<dbReference type="NCBIfam" id="NF003645">
    <property type="entry name" value="PRK05286.1-2"/>
    <property type="match status" value="1"/>
</dbReference>
<dbReference type="NCBIfam" id="NF003646">
    <property type="entry name" value="PRK05286.1-4"/>
    <property type="match status" value="1"/>
</dbReference>
<dbReference type="NCBIfam" id="NF003652">
    <property type="entry name" value="PRK05286.2-5"/>
    <property type="match status" value="1"/>
</dbReference>
<dbReference type="NCBIfam" id="TIGR01036">
    <property type="entry name" value="pyrD_sub2"/>
    <property type="match status" value="1"/>
</dbReference>
<dbReference type="PANTHER" id="PTHR48109:SF4">
    <property type="entry name" value="DIHYDROOROTATE DEHYDROGENASE (QUINONE), MITOCHONDRIAL"/>
    <property type="match status" value="1"/>
</dbReference>
<dbReference type="PANTHER" id="PTHR48109">
    <property type="entry name" value="DIHYDROOROTATE DEHYDROGENASE (QUINONE), MITOCHONDRIAL-RELATED"/>
    <property type="match status" value="1"/>
</dbReference>
<dbReference type="Pfam" id="PF01180">
    <property type="entry name" value="DHO_dh"/>
    <property type="match status" value="1"/>
</dbReference>
<dbReference type="PIRSF" id="PIRSF000164">
    <property type="entry name" value="DHO_oxidase"/>
    <property type="match status" value="1"/>
</dbReference>
<dbReference type="SUPFAM" id="SSF51395">
    <property type="entry name" value="FMN-linked oxidoreductases"/>
    <property type="match status" value="1"/>
</dbReference>
<dbReference type="PROSITE" id="PS00911">
    <property type="entry name" value="DHODEHASE_1"/>
    <property type="match status" value="1"/>
</dbReference>
<dbReference type="PROSITE" id="PS00912">
    <property type="entry name" value="DHODEHASE_2"/>
    <property type="match status" value="1"/>
</dbReference>
<organism>
    <name type="scientific">Acinetobacter baumannii (strain AB0057)</name>
    <dbReference type="NCBI Taxonomy" id="480119"/>
    <lineage>
        <taxon>Bacteria</taxon>
        <taxon>Pseudomonadati</taxon>
        <taxon>Pseudomonadota</taxon>
        <taxon>Gammaproteobacteria</taxon>
        <taxon>Moraxellales</taxon>
        <taxon>Moraxellaceae</taxon>
        <taxon>Acinetobacter</taxon>
        <taxon>Acinetobacter calcoaceticus/baumannii complex</taxon>
    </lineage>
</organism>
<reference key="1">
    <citation type="journal article" date="2008" name="J. Bacteriol.">
        <title>Comparative genome sequence analysis of multidrug-resistant Acinetobacter baumannii.</title>
        <authorList>
            <person name="Adams M.D."/>
            <person name="Goglin K."/>
            <person name="Molyneaux N."/>
            <person name="Hujer K.M."/>
            <person name="Lavender H."/>
            <person name="Jamison J.J."/>
            <person name="MacDonald I.J."/>
            <person name="Martin K.M."/>
            <person name="Russo T."/>
            <person name="Campagnari A.A."/>
            <person name="Hujer A.M."/>
            <person name="Bonomo R.A."/>
            <person name="Gill S.R."/>
        </authorList>
    </citation>
    <scope>NUCLEOTIDE SEQUENCE [LARGE SCALE GENOMIC DNA]</scope>
    <source>
        <strain>AB0057</strain>
    </source>
</reference>